<organism>
    <name type="scientific">Ignicoccus hospitalis (strain KIN4/I / DSM 18386 / JCM 14125)</name>
    <dbReference type="NCBI Taxonomy" id="453591"/>
    <lineage>
        <taxon>Archaea</taxon>
        <taxon>Thermoproteota</taxon>
        <taxon>Thermoprotei</taxon>
        <taxon>Desulfurococcales</taxon>
        <taxon>Desulfurococcaceae</taxon>
        <taxon>Ignicoccus</taxon>
    </lineage>
</organism>
<gene>
    <name type="ordered locus">Igni_1066</name>
</gene>
<proteinExistence type="inferred from homology"/>
<evidence type="ECO:0000255" key="1">
    <source>
        <dbReference type="HAMAP-Rule" id="MF_00796"/>
    </source>
</evidence>
<feature type="chain" id="PRO_0000360022" description="Nucleoside-triphosphatase THEP1">
    <location>
        <begin position="1"/>
        <end position="171"/>
    </location>
</feature>
<feature type="binding site" evidence="1">
    <location>
        <begin position="8"/>
        <end position="15"/>
    </location>
    <ligand>
        <name>ATP</name>
        <dbReference type="ChEBI" id="CHEBI:30616"/>
    </ligand>
</feature>
<feature type="binding site" evidence="1">
    <location>
        <begin position="95"/>
        <end position="102"/>
    </location>
    <ligand>
        <name>ATP</name>
        <dbReference type="ChEBI" id="CHEBI:30616"/>
    </ligand>
</feature>
<protein>
    <recommendedName>
        <fullName evidence="1">Nucleoside-triphosphatase THEP1</fullName>
        <shortName evidence="1">NTPase THEP1</shortName>
        <ecNumber evidence="1">3.6.1.15</ecNumber>
    </recommendedName>
    <alternativeName>
        <fullName evidence="1">Nucleoside triphosphate phosphohydrolase</fullName>
    </alternativeName>
</protein>
<keyword id="KW-0067">ATP-binding</keyword>
<keyword id="KW-0378">Hydrolase</keyword>
<keyword id="KW-0547">Nucleotide-binding</keyword>
<keyword id="KW-1185">Reference proteome</keyword>
<reference key="1">
    <citation type="journal article" date="2008" name="Genome Biol.">
        <title>A genomic analysis of the archaeal system Ignicoccus hospitalis-Nanoarchaeum equitans.</title>
        <authorList>
            <person name="Podar M."/>
            <person name="Anderson I."/>
            <person name="Makarova K.S."/>
            <person name="Elkins J.G."/>
            <person name="Ivanova N."/>
            <person name="Wall M.A."/>
            <person name="Lykidis A."/>
            <person name="Mavromatis K."/>
            <person name="Sun H."/>
            <person name="Hudson M.E."/>
            <person name="Chen W."/>
            <person name="Deciu C."/>
            <person name="Hutchison D."/>
            <person name="Eads J.R."/>
            <person name="Anderson A."/>
            <person name="Fernandes F."/>
            <person name="Szeto E."/>
            <person name="Lapidus A."/>
            <person name="Kyrpides N.C."/>
            <person name="Saier M.H. Jr."/>
            <person name="Richardson P.M."/>
            <person name="Rachel R."/>
            <person name="Huber H."/>
            <person name="Eisen J.A."/>
            <person name="Koonin E.V."/>
            <person name="Keller M."/>
            <person name="Stetter K.O."/>
        </authorList>
    </citation>
    <scope>NUCLEOTIDE SEQUENCE [LARGE SCALE GENOMIC DNA]</scope>
    <source>
        <strain>KIN4/I / DSM 18386 / JCM 14125</strain>
    </source>
</reference>
<sequence length="171" mass="18946">MWCLAITGPPGAGKSTLARKVVEELKKAGLKVCGTSCPDVREGGRRVGFLIVDVEDGSRAWLARVDCEGPRVGRYKLCPGAEEVGVRALSKDCDVYLIDEIGPMELKLPKLREAMLRVVSGNKPFVAVYHARLRDEEFLRALSRCHKIFVTKDTREEAWKEALEALSSFSP</sequence>
<name>NTPTH_IGNH4</name>
<accession>A8ABE2</accession>
<dbReference type="EC" id="3.6.1.15" evidence="1"/>
<dbReference type="EMBL" id="CP000816">
    <property type="protein sequence ID" value="ABU82244.1"/>
    <property type="molecule type" value="Genomic_DNA"/>
</dbReference>
<dbReference type="RefSeq" id="WP_012123208.1">
    <property type="nucleotide sequence ID" value="NC_009776.1"/>
</dbReference>
<dbReference type="SMR" id="A8ABE2"/>
<dbReference type="STRING" id="453591.Igni_1066"/>
<dbReference type="GeneID" id="5562539"/>
<dbReference type="KEGG" id="iho:Igni_1066"/>
<dbReference type="eggNOG" id="arCOG01034">
    <property type="taxonomic scope" value="Archaea"/>
</dbReference>
<dbReference type="HOGENOM" id="CLU_103145_1_0_2"/>
<dbReference type="OrthoDB" id="52698at2157"/>
<dbReference type="PhylomeDB" id="A8ABE2"/>
<dbReference type="Proteomes" id="UP000000262">
    <property type="component" value="Chromosome"/>
</dbReference>
<dbReference type="GO" id="GO:0005524">
    <property type="term" value="F:ATP binding"/>
    <property type="evidence" value="ECO:0007669"/>
    <property type="project" value="UniProtKB-UniRule"/>
</dbReference>
<dbReference type="GO" id="GO:0016887">
    <property type="term" value="F:ATP hydrolysis activity"/>
    <property type="evidence" value="ECO:0007669"/>
    <property type="project" value="InterPro"/>
</dbReference>
<dbReference type="CDD" id="cd19482">
    <property type="entry name" value="RecA-like_Thep1"/>
    <property type="match status" value="1"/>
</dbReference>
<dbReference type="Gene3D" id="3.40.50.300">
    <property type="entry name" value="P-loop containing nucleotide triphosphate hydrolases"/>
    <property type="match status" value="1"/>
</dbReference>
<dbReference type="HAMAP" id="MF_00796">
    <property type="entry name" value="NTPase_1"/>
    <property type="match status" value="1"/>
</dbReference>
<dbReference type="InterPro" id="IPR003593">
    <property type="entry name" value="AAA+_ATPase"/>
</dbReference>
<dbReference type="InterPro" id="IPR004948">
    <property type="entry name" value="Nuc-triphosphatase_THEP1"/>
</dbReference>
<dbReference type="InterPro" id="IPR027417">
    <property type="entry name" value="P-loop_NTPase"/>
</dbReference>
<dbReference type="PANTHER" id="PTHR43146">
    <property type="entry name" value="CANCER-RELATED NUCLEOSIDE-TRIPHOSPHATASE"/>
    <property type="match status" value="1"/>
</dbReference>
<dbReference type="PANTHER" id="PTHR43146:SF1">
    <property type="entry name" value="CANCER-RELATED NUCLEOSIDE-TRIPHOSPHATASE"/>
    <property type="match status" value="1"/>
</dbReference>
<dbReference type="Pfam" id="PF03266">
    <property type="entry name" value="NTPase_1"/>
    <property type="match status" value="1"/>
</dbReference>
<dbReference type="SMART" id="SM00382">
    <property type="entry name" value="AAA"/>
    <property type="match status" value="1"/>
</dbReference>
<dbReference type="SUPFAM" id="SSF52540">
    <property type="entry name" value="P-loop containing nucleoside triphosphate hydrolases"/>
    <property type="match status" value="1"/>
</dbReference>
<comment type="function">
    <text evidence="1">Has nucleotide phosphatase activity towards ATP, GTP, CTP, TTP and UTP. May hydrolyze nucleoside diphosphates with lower efficiency.</text>
</comment>
<comment type="catalytic activity">
    <reaction evidence="1">
        <text>a ribonucleoside 5'-triphosphate + H2O = a ribonucleoside 5'-diphosphate + phosphate + H(+)</text>
        <dbReference type="Rhea" id="RHEA:23680"/>
        <dbReference type="ChEBI" id="CHEBI:15377"/>
        <dbReference type="ChEBI" id="CHEBI:15378"/>
        <dbReference type="ChEBI" id="CHEBI:43474"/>
        <dbReference type="ChEBI" id="CHEBI:57930"/>
        <dbReference type="ChEBI" id="CHEBI:61557"/>
        <dbReference type="EC" id="3.6.1.15"/>
    </reaction>
</comment>
<comment type="similarity">
    <text evidence="1">Belongs to the THEP1 NTPase family.</text>
</comment>